<organism>
    <name type="scientific">Burkholderia ambifaria (strain MC40-6)</name>
    <dbReference type="NCBI Taxonomy" id="398577"/>
    <lineage>
        <taxon>Bacteria</taxon>
        <taxon>Pseudomonadati</taxon>
        <taxon>Pseudomonadota</taxon>
        <taxon>Betaproteobacteria</taxon>
        <taxon>Burkholderiales</taxon>
        <taxon>Burkholderiaceae</taxon>
        <taxon>Burkholderia</taxon>
        <taxon>Burkholderia cepacia complex</taxon>
    </lineage>
</organism>
<name>LIFO_BURA4</name>
<gene>
    <name evidence="1" type="primary">lifO</name>
    <name type="ordered locus">BamMC406_3810</name>
</gene>
<accession>B1Z1J6</accession>
<evidence type="ECO:0000255" key="1">
    <source>
        <dbReference type="HAMAP-Rule" id="MF_00790"/>
    </source>
</evidence>
<feature type="chain" id="PRO_1000190849" description="Lipase chaperone">
    <location>
        <begin position="1"/>
        <end position="344"/>
    </location>
</feature>
<feature type="transmembrane region" description="Helical" evidence="1">
    <location>
        <begin position="14"/>
        <end position="34"/>
    </location>
</feature>
<proteinExistence type="inferred from homology"/>
<sequence length="344" mass="36384">MTAREGRAPLVRRVAVYGAVGLAAIAGVAIWSGAASHRGADTARLSADAAARDGASAASPPPALPASAGLPAPLAGSSAPRLPLDAGGHLAKSRAVRDFFDYCLSARSDLSATALDALVVRGIAAQLDGTIAQPEALDVWHRYRAYLDALAKLPDAGAVDKSDLGALQLALDQRVSIAYRTLGDWSQPFFGAEQWRQRYDLARLKIAQDRTLTEAQKAERLAALAQQMPADERAARQKADRQQAAIDQIAQLQKSGATPDAMRAQLTQTLGPDAAARVAQMQQDDASWQSRYADYAAQRAQIDAAGLSPQDRDAQIASLRQRMFTKPGEAVRAASLDRGAAAAR</sequence>
<dbReference type="EMBL" id="CP001026">
    <property type="protein sequence ID" value="ACB66277.1"/>
    <property type="molecule type" value="Genomic_DNA"/>
</dbReference>
<dbReference type="RefSeq" id="WP_012365663.1">
    <property type="nucleotide sequence ID" value="NC_010552.1"/>
</dbReference>
<dbReference type="SMR" id="B1Z1J6"/>
<dbReference type="KEGG" id="bac:BamMC406_3810"/>
<dbReference type="HOGENOM" id="CLU_064928_1_0_4"/>
<dbReference type="OrthoDB" id="8779274at2"/>
<dbReference type="Proteomes" id="UP000001680">
    <property type="component" value="Chromosome 2"/>
</dbReference>
<dbReference type="GO" id="GO:0005886">
    <property type="term" value="C:plasma membrane"/>
    <property type="evidence" value="ECO:0007669"/>
    <property type="project" value="UniProtKB-SubCell"/>
</dbReference>
<dbReference type="GO" id="GO:0051082">
    <property type="term" value="F:unfolded protein binding"/>
    <property type="evidence" value="ECO:0007669"/>
    <property type="project" value="UniProtKB-UniRule"/>
</dbReference>
<dbReference type="GO" id="GO:0016042">
    <property type="term" value="P:lipid catabolic process"/>
    <property type="evidence" value="ECO:0007669"/>
    <property type="project" value="UniProtKB-UniRule"/>
</dbReference>
<dbReference type="GO" id="GO:0006457">
    <property type="term" value="P:protein folding"/>
    <property type="evidence" value="ECO:0007669"/>
    <property type="project" value="UniProtKB-UniRule"/>
</dbReference>
<dbReference type="HAMAP" id="MF_00790">
    <property type="entry name" value="Lipase_chap"/>
    <property type="match status" value="1"/>
</dbReference>
<dbReference type="InterPro" id="IPR004961">
    <property type="entry name" value="Lipase_chaperone"/>
</dbReference>
<dbReference type="NCBIfam" id="NF002333">
    <property type="entry name" value="PRK01294.1-1"/>
    <property type="match status" value="1"/>
</dbReference>
<dbReference type="Pfam" id="PF03280">
    <property type="entry name" value="Lipase_chap"/>
    <property type="match status" value="1"/>
</dbReference>
<dbReference type="SUPFAM" id="SSF158855">
    <property type="entry name" value="Lipase chaperone-like"/>
    <property type="match status" value="1"/>
</dbReference>
<comment type="function">
    <text evidence="1">May be involved in the folding of the extracellular lipase during its passage through the periplasm.</text>
</comment>
<comment type="subcellular location">
    <subcellularLocation>
        <location evidence="1">Cell inner membrane</location>
        <topology evidence="1">Single-pass membrane protein</topology>
    </subcellularLocation>
</comment>
<comment type="similarity">
    <text evidence="1">Belongs to the lipase chaperone family.</text>
</comment>
<reference key="1">
    <citation type="submission" date="2008-04" db="EMBL/GenBank/DDBJ databases">
        <title>Complete sequence of chromosome 2 of Burkholderia ambifaria MC40-6.</title>
        <authorList>
            <person name="Copeland A."/>
            <person name="Lucas S."/>
            <person name="Lapidus A."/>
            <person name="Glavina del Rio T."/>
            <person name="Dalin E."/>
            <person name="Tice H."/>
            <person name="Pitluck S."/>
            <person name="Chain P."/>
            <person name="Malfatti S."/>
            <person name="Shin M."/>
            <person name="Vergez L."/>
            <person name="Lang D."/>
            <person name="Schmutz J."/>
            <person name="Larimer F."/>
            <person name="Land M."/>
            <person name="Hauser L."/>
            <person name="Kyrpides N."/>
            <person name="Lykidis A."/>
            <person name="Ramette A."/>
            <person name="Konstantinidis K."/>
            <person name="Tiedje J."/>
            <person name="Richardson P."/>
        </authorList>
    </citation>
    <scope>NUCLEOTIDE SEQUENCE [LARGE SCALE GENOMIC DNA]</scope>
    <source>
        <strain>MC40-6</strain>
    </source>
</reference>
<protein>
    <recommendedName>
        <fullName evidence="1">Lipase chaperone</fullName>
    </recommendedName>
    <alternativeName>
        <fullName evidence="1">Lipase activator protein</fullName>
    </alternativeName>
    <alternativeName>
        <fullName evidence="1">Lipase foldase</fullName>
    </alternativeName>
    <alternativeName>
        <fullName evidence="1">Lipase helper protein</fullName>
    </alternativeName>
    <alternativeName>
        <fullName evidence="1">Lipase modulator</fullName>
    </alternativeName>
</protein>
<keyword id="KW-0997">Cell inner membrane</keyword>
<keyword id="KW-1003">Cell membrane</keyword>
<keyword id="KW-0143">Chaperone</keyword>
<keyword id="KW-0442">Lipid degradation</keyword>
<keyword id="KW-0443">Lipid metabolism</keyword>
<keyword id="KW-0472">Membrane</keyword>
<keyword id="KW-0812">Transmembrane</keyword>
<keyword id="KW-1133">Transmembrane helix</keyword>